<accession>Q1C932</accession>
<keyword id="KW-0274">FAD</keyword>
<keyword id="KW-0285">Flavoprotein</keyword>
<keyword id="KW-0520">NAD</keyword>
<keyword id="KW-0560">Oxidoreductase</keyword>
<protein>
    <recommendedName>
        <fullName evidence="1">Oxygen-dependent choline dehydrogenase</fullName>
        <shortName evidence="1">CDH</shortName>
        <shortName evidence="1">CHD</shortName>
        <ecNumber evidence="1">1.1.99.1</ecNumber>
    </recommendedName>
    <alternativeName>
        <fullName evidence="1">Betaine aldehyde dehydrogenase</fullName>
        <shortName evidence="1">BADH</shortName>
        <ecNumber evidence="1">1.2.1.8</ecNumber>
    </alternativeName>
</protein>
<sequence>MEYDYIIIGAGSAGNVLAARLTEDADVTVLLLEAGGPDYRLDFRTQMPAALAFPLQGKRYNWAYETDPEPHMNNRRMECGRGKGLGGSSLINGMCYIRGNAMDFDHWASLSGLEDWSYLDCLPYFRKAETRDIGPNDFHGGEGPVSVTTPKIGNNPLFHAMVAAGVQAGYPRTDDLNGYQQEGFGPMDRTVTPKGRRASTARGYLDQARPRNNLTIITHALTDRILFEGKRATGVRYLKGDAGTGQTAYARREVLLCGGAIASPQILQRSGIGPAELLQRLDIPLVQALPGVGENLQDHLEMYLQYSCKQPVSLYPALLWFNQPKIGIEWLFNGTGVGASNQFEAGGFIRSRDAFTWPNIQYHFLPVAINYNGSNAVKEHGFQAHVGSMRSPSRGRIQVKSKDPRQHPSILFNYMSSEQDWHEFRDAIRITREIIAQPALDPYRGREISPGANVQNDDELDAFIREHAETAYHPSCSCKMGDDKMAVVDGQGRVHGVQGLRVVDASIMPQIITGNLNATTIMIAEKIADRIRGCQPLAKSNAAYFIAGDTPARTSPVRHSLPVTSYP</sequence>
<comment type="function">
    <text evidence="1">Involved in the biosynthesis of the osmoprotectant glycine betaine. Catalyzes the oxidation of choline to betaine aldehyde and betaine aldehyde to glycine betaine at the same rate.</text>
</comment>
<comment type="catalytic activity">
    <reaction evidence="1">
        <text>choline + A = betaine aldehyde + AH2</text>
        <dbReference type="Rhea" id="RHEA:17433"/>
        <dbReference type="ChEBI" id="CHEBI:13193"/>
        <dbReference type="ChEBI" id="CHEBI:15354"/>
        <dbReference type="ChEBI" id="CHEBI:15710"/>
        <dbReference type="ChEBI" id="CHEBI:17499"/>
        <dbReference type="EC" id="1.1.99.1"/>
    </reaction>
</comment>
<comment type="catalytic activity">
    <reaction evidence="1">
        <text>betaine aldehyde + NAD(+) + H2O = glycine betaine + NADH + 2 H(+)</text>
        <dbReference type="Rhea" id="RHEA:15305"/>
        <dbReference type="ChEBI" id="CHEBI:15377"/>
        <dbReference type="ChEBI" id="CHEBI:15378"/>
        <dbReference type="ChEBI" id="CHEBI:15710"/>
        <dbReference type="ChEBI" id="CHEBI:17750"/>
        <dbReference type="ChEBI" id="CHEBI:57540"/>
        <dbReference type="ChEBI" id="CHEBI:57945"/>
        <dbReference type="EC" id="1.2.1.8"/>
    </reaction>
</comment>
<comment type="cofactor">
    <cofactor evidence="1">
        <name>FAD</name>
        <dbReference type="ChEBI" id="CHEBI:57692"/>
    </cofactor>
</comment>
<comment type="pathway">
    <text evidence="1">Amine and polyamine biosynthesis; betaine biosynthesis via choline pathway; betaine aldehyde from choline (cytochrome c reductase route): step 1/1.</text>
</comment>
<comment type="similarity">
    <text evidence="1">Belongs to the GMC oxidoreductase family.</text>
</comment>
<proteinExistence type="inferred from homology"/>
<evidence type="ECO:0000255" key="1">
    <source>
        <dbReference type="HAMAP-Rule" id="MF_00750"/>
    </source>
</evidence>
<gene>
    <name evidence="1" type="primary">betA</name>
    <name type="ordered locus">YPA_1073</name>
</gene>
<feature type="chain" id="PRO_0000258939" description="Oxygen-dependent choline dehydrogenase">
    <location>
        <begin position="1"/>
        <end position="567"/>
    </location>
</feature>
<feature type="active site" description="Proton acceptor" evidence="1">
    <location>
        <position position="473"/>
    </location>
</feature>
<feature type="binding site" evidence="1">
    <location>
        <begin position="4"/>
        <end position="33"/>
    </location>
    <ligand>
        <name>FAD</name>
        <dbReference type="ChEBI" id="CHEBI:57692"/>
    </ligand>
</feature>
<name>BETA_YERPA</name>
<organism>
    <name type="scientific">Yersinia pestis bv. Antiqua (strain Antiqua)</name>
    <dbReference type="NCBI Taxonomy" id="360102"/>
    <lineage>
        <taxon>Bacteria</taxon>
        <taxon>Pseudomonadati</taxon>
        <taxon>Pseudomonadota</taxon>
        <taxon>Gammaproteobacteria</taxon>
        <taxon>Enterobacterales</taxon>
        <taxon>Yersiniaceae</taxon>
        <taxon>Yersinia</taxon>
    </lineage>
</organism>
<reference key="1">
    <citation type="journal article" date="2006" name="J. Bacteriol.">
        <title>Complete genome sequence of Yersinia pestis strains Antiqua and Nepal516: evidence of gene reduction in an emerging pathogen.</title>
        <authorList>
            <person name="Chain P.S.G."/>
            <person name="Hu P."/>
            <person name="Malfatti S.A."/>
            <person name="Radnedge L."/>
            <person name="Larimer F."/>
            <person name="Vergez L.M."/>
            <person name="Worsham P."/>
            <person name="Chu M.C."/>
            <person name="Andersen G.L."/>
        </authorList>
    </citation>
    <scope>NUCLEOTIDE SEQUENCE [LARGE SCALE GENOMIC DNA]</scope>
    <source>
        <strain>Antiqua</strain>
    </source>
</reference>
<dbReference type="EC" id="1.1.99.1" evidence="1"/>
<dbReference type="EC" id="1.2.1.8" evidence="1"/>
<dbReference type="EMBL" id="CP000308">
    <property type="protein sequence ID" value="ABG13040.1"/>
    <property type="molecule type" value="Genomic_DNA"/>
</dbReference>
<dbReference type="RefSeq" id="WP_002220180.1">
    <property type="nucleotide sequence ID" value="NZ_CP009906.1"/>
</dbReference>
<dbReference type="SMR" id="Q1C932"/>
<dbReference type="GeneID" id="57977304"/>
<dbReference type="KEGG" id="ypa:YPA_1073"/>
<dbReference type="UniPathway" id="UPA00529">
    <property type="reaction ID" value="UER00385"/>
</dbReference>
<dbReference type="Proteomes" id="UP000001971">
    <property type="component" value="Chromosome"/>
</dbReference>
<dbReference type="GO" id="GO:0016020">
    <property type="term" value="C:membrane"/>
    <property type="evidence" value="ECO:0007669"/>
    <property type="project" value="TreeGrafter"/>
</dbReference>
<dbReference type="GO" id="GO:0008802">
    <property type="term" value="F:betaine-aldehyde dehydrogenase (NAD+) activity"/>
    <property type="evidence" value="ECO:0007669"/>
    <property type="project" value="UniProtKB-EC"/>
</dbReference>
<dbReference type="GO" id="GO:0008812">
    <property type="term" value="F:choline dehydrogenase activity"/>
    <property type="evidence" value="ECO:0007669"/>
    <property type="project" value="UniProtKB-UniRule"/>
</dbReference>
<dbReference type="GO" id="GO:0050660">
    <property type="term" value="F:flavin adenine dinucleotide binding"/>
    <property type="evidence" value="ECO:0007669"/>
    <property type="project" value="InterPro"/>
</dbReference>
<dbReference type="GO" id="GO:0019285">
    <property type="term" value="P:glycine betaine biosynthetic process from choline"/>
    <property type="evidence" value="ECO:0007669"/>
    <property type="project" value="UniProtKB-UniRule"/>
</dbReference>
<dbReference type="Gene3D" id="3.50.50.60">
    <property type="entry name" value="FAD/NAD(P)-binding domain"/>
    <property type="match status" value="1"/>
</dbReference>
<dbReference type="Gene3D" id="3.30.560.10">
    <property type="entry name" value="Glucose Oxidase, domain 3"/>
    <property type="match status" value="1"/>
</dbReference>
<dbReference type="HAMAP" id="MF_00750">
    <property type="entry name" value="Choline_dehydrogen"/>
    <property type="match status" value="1"/>
</dbReference>
<dbReference type="InterPro" id="IPR011533">
    <property type="entry name" value="BetA"/>
</dbReference>
<dbReference type="InterPro" id="IPR036188">
    <property type="entry name" value="FAD/NAD-bd_sf"/>
</dbReference>
<dbReference type="InterPro" id="IPR012132">
    <property type="entry name" value="GMC_OxRdtase"/>
</dbReference>
<dbReference type="InterPro" id="IPR000172">
    <property type="entry name" value="GMC_OxRdtase_N"/>
</dbReference>
<dbReference type="InterPro" id="IPR007867">
    <property type="entry name" value="GMC_OxRtase_C"/>
</dbReference>
<dbReference type="NCBIfam" id="TIGR01810">
    <property type="entry name" value="betA"/>
    <property type="match status" value="1"/>
</dbReference>
<dbReference type="NCBIfam" id="NF002550">
    <property type="entry name" value="PRK02106.1"/>
    <property type="match status" value="1"/>
</dbReference>
<dbReference type="PANTHER" id="PTHR11552:SF147">
    <property type="entry name" value="CHOLINE DEHYDROGENASE, MITOCHONDRIAL"/>
    <property type="match status" value="1"/>
</dbReference>
<dbReference type="PANTHER" id="PTHR11552">
    <property type="entry name" value="GLUCOSE-METHANOL-CHOLINE GMC OXIDOREDUCTASE"/>
    <property type="match status" value="1"/>
</dbReference>
<dbReference type="Pfam" id="PF05199">
    <property type="entry name" value="GMC_oxred_C"/>
    <property type="match status" value="1"/>
</dbReference>
<dbReference type="Pfam" id="PF00732">
    <property type="entry name" value="GMC_oxred_N"/>
    <property type="match status" value="1"/>
</dbReference>
<dbReference type="PIRSF" id="PIRSF000137">
    <property type="entry name" value="Alcohol_oxidase"/>
    <property type="match status" value="1"/>
</dbReference>
<dbReference type="SUPFAM" id="SSF54373">
    <property type="entry name" value="FAD-linked reductases, C-terminal domain"/>
    <property type="match status" value="1"/>
</dbReference>
<dbReference type="SUPFAM" id="SSF51905">
    <property type="entry name" value="FAD/NAD(P)-binding domain"/>
    <property type="match status" value="1"/>
</dbReference>
<dbReference type="PROSITE" id="PS00623">
    <property type="entry name" value="GMC_OXRED_1"/>
    <property type="match status" value="1"/>
</dbReference>
<dbReference type="PROSITE" id="PS00624">
    <property type="entry name" value="GMC_OXRED_2"/>
    <property type="match status" value="1"/>
</dbReference>